<sequence length="72" mass="8338">MIVPWQGLSPDTLDNLIESFVLREGTDYGEHERSLEQKVADVKRQLQSGEAVLVWSELHETVNIMPKKQFRD</sequence>
<evidence type="ECO:0000255" key="1">
    <source>
        <dbReference type="HAMAP-Rule" id="MF_00690"/>
    </source>
</evidence>
<gene>
    <name evidence="1" type="primary">yheU</name>
    <name type="ordered locus">SARI_04152</name>
</gene>
<reference key="1">
    <citation type="submission" date="2007-11" db="EMBL/GenBank/DDBJ databases">
        <authorList>
            <consortium name="The Salmonella enterica serovar Arizonae Genome Sequencing Project"/>
            <person name="McClelland M."/>
            <person name="Sanderson E.K."/>
            <person name="Porwollik S."/>
            <person name="Spieth J."/>
            <person name="Clifton W.S."/>
            <person name="Fulton R."/>
            <person name="Chunyan W."/>
            <person name="Wollam A."/>
            <person name="Shah N."/>
            <person name="Pepin K."/>
            <person name="Bhonagiri V."/>
            <person name="Nash W."/>
            <person name="Johnson M."/>
            <person name="Thiruvilangam P."/>
            <person name="Wilson R."/>
        </authorList>
    </citation>
    <scope>NUCLEOTIDE SEQUENCE [LARGE SCALE GENOMIC DNA]</scope>
    <source>
        <strain>ATCC BAA-731 / CDC346-86 / RSK2980</strain>
    </source>
</reference>
<keyword id="KW-1185">Reference proteome</keyword>
<accession>A9MN11</accession>
<organism>
    <name type="scientific">Salmonella arizonae (strain ATCC BAA-731 / CDC346-86 / RSK2980)</name>
    <dbReference type="NCBI Taxonomy" id="41514"/>
    <lineage>
        <taxon>Bacteria</taxon>
        <taxon>Pseudomonadati</taxon>
        <taxon>Pseudomonadota</taxon>
        <taxon>Gammaproteobacteria</taxon>
        <taxon>Enterobacterales</taxon>
        <taxon>Enterobacteriaceae</taxon>
        <taxon>Salmonella</taxon>
    </lineage>
</organism>
<name>YHEU_SALAR</name>
<comment type="similarity">
    <text evidence="1">Belongs to the UPF0270 family.</text>
</comment>
<protein>
    <recommendedName>
        <fullName evidence="1">UPF0270 protein YheU</fullName>
    </recommendedName>
</protein>
<dbReference type="EMBL" id="CP000880">
    <property type="protein sequence ID" value="ABX23941.1"/>
    <property type="molecule type" value="Genomic_DNA"/>
</dbReference>
<dbReference type="SMR" id="A9MN11"/>
<dbReference type="STRING" id="41514.SARI_04152"/>
<dbReference type="KEGG" id="ses:SARI_04152"/>
<dbReference type="HOGENOM" id="CLU_186759_1_0_6"/>
<dbReference type="Proteomes" id="UP000002084">
    <property type="component" value="Chromosome"/>
</dbReference>
<dbReference type="Gene3D" id="1.10.10.610">
    <property type="entry name" value="YehU-like"/>
    <property type="match status" value="1"/>
</dbReference>
<dbReference type="HAMAP" id="MF_00690">
    <property type="entry name" value="UPF0270"/>
    <property type="match status" value="1"/>
</dbReference>
<dbReference type="InterPro" id="IPR010648">
    <property type="entry name" value="UPF0270"/>
</dbReference>
<dbReference type="InterPro" id="IPR036685">
    <property type="entry name" value="YehU-like_sf"/>
</dbReference>
<dbReference type="NCBIfam" id="NF003438">
    <property type="entry name" value="PRK04966.1"/>
    <property type="match status" value="1"/>
</dbReference>
<dbReference type="Pfam" id="PF06794">
    <property type="entry name" value="UPF0270"/>
    <property type="match status" value="1"/>
</dbReference>
<dbReference type="PIRSF" id="PIRSF006169">
    <property type="entry name" value="UCP006169"/>
    <property type="match status" value="1"/>
</dbReference>
<dbReference type="SUPFAM" id="SSF118001">
    <property type="entry name" value="YehU-like"/>
    <property type="match status" value="1"/>
</dbReference>
<proteinExistence type="inferred from homology"/>
<feature type="chain" id="PRO_1000083113" description="UPF0270 protein YheU">
    <location>
        <begin position="1"/>
        <end position="72"/>
    </location>
</feature>